<sequence length="287" mass="31578">MAGAKEIRSKIASVQNTQKITKAMEMVAASKMRKSQERMAASRPYAETMRSVIGHLALGNLEYKHPYLEERDVKRVGYLVVSTDRGLCGGLNINLFKRLLAEMKGWSEKGVECDLALIGSKAASFFGSVGGKIVAQVTGMGDNPSLSELIGPVKVMLQAYDEGRLDKLYIVNNKFINTMSQEPRIMQLLPLPPAEDGELKKKSWDYLYEPDPKALLDTLLRRYVESQVYQGVVENLASEQAARMVAMKAATDNGGSLIKELQLVYNKARQASITQELTEIVGGASAV</sequence>
<evidence type="ECO:0000255" key="1">
    <source>
        <dbReference type="HAMAP-Rule" id="MF_00815"/>
    </source>
</evidence>
<feature type="chain" id="PRO_1000134227" description="ATP synthase gamma chain">
    <location>
        <begin position="1"/>
        <end position="287"/>
    </location>
</feature>
<gene>
    <name evidence="1" type="primary">atpG</name>
    <name type="ordered locus">YpAngola_A4203</name>
</gene>
<dbReference type="EMBL" id="CP000901">
    <property type="protein sequence ID" value="ABX88397.1"/>
    <property type="molecule type" value="Genomic_DNA"/>
</dbReference>
<dbReference type="RefSeq" id="WP_002220756.1">
    <property type="nucleotide sequence ID" value="NZ_CP009935.1"/>
</dbReference>
<dbReference type="SMR" id="A9R5U0"/>
<dbReference type="GeneID" id="96663460"/>
<dbReference type="KEGG" id="ypg:YpAngola_A4203"/>
<dbReference type="PATRIC" id="fig|349746.12.peg.940"/>
<dbReference type="GO" id="GO:0005886">
    <property type="term" value="C:plasma membrane"/>
    <property type="evidence" value="ECO:0007669"/>
    <property type="project" value="UniProtKB-SubCell"/>
</dbReference>
<dbReference type="GO" id="GO:0045259">
    <property type="term" value="C:proton-transporting ATP synthase complex"/>
    <property type="evidence" value="ECO:0007669"/>
    <property type="project" value="UniProtKB-KW"/>
</dbReference>
<dbReference type="GO" id="GO:0005524">
    <property type="term" value="F:ATP binding"/>
    <property type="evidence" value="ECO:0007669"/>
    <property type="project" value="UniProtKB-UniRule"/>
</dbReference>
<dbReference type="GO" id="GO:0046933">
    <property type="term" value="F:proton-transporting ATP synthase activity, rotational mechanism"/>
    <property type="evidence" value="ECO:0007669"/>
    <property type="project" value="UniProtKB-UniRule"/>
</dbReference>
<dbReference type="GO" id="GO:0042777">
    <property type="term" value="P:proton motive force-driven plasma membrane ATP synthesis"/>
    <property type="evidence" value="ECO:0007669"/>
    <property type="project" value="UniProtKB-UniRule"/>
</dbReference>
<dbReference type="CDD" id="cd12151">
    <property type="entry name" value="F1-ATPase_gamma"/>
    <property type="match status" value="1"/>
</dbReference>
<dbReference type="FunFam" id="1.10.287.80:FF:000005">
    <property type="entry name" value="ATP synthase gamma chain"/>
    <property type="match status" value="2"/>
</dbReference>
<dbReference type="FunFam" id="3.40.1380.10:FF:000001">
    <property type="entry name" value="ATP synthase gamma chain"/>
    <property type="match status" value="1"/>
</dbReference>
<dbReference type="Gene3D" id="3.40.1380.10">
    <property type="match status" value="1"/>
</dbReference>
<dbReference type="Gene3D" id="1.10.287.80">
    <property type="entry name" value="ATP synthase, gamma subunit, helix hairpin domain"/>
    <property type="match status" value="1"/>
</dbReference>
<dbReference type="HAMAP" id="MF_00815">
    <property type="entry name" value="ATP_synth_gamma_bact"/>
    <property type="match status" value="1"/>
</dbReference>
<dbReference type="InterPro" id="IPR035968">
    <property type="entry name" value="ATP_synth_F1_ATPase_gsu"/>
</dbReference>
<dbReference type="InterPro" id="IPR000131">
    <property type="entry name" value="ATP_synth_F1_gsu"/>
</dbReference>
<dbReference type="InterPro" id="IPR023632">
    <property type="entry name" value="ATP_synth_F1_gsu_CS"/>
</dbReference>
<dbReference type="NCBIfam" id="TIGR01146">
    <property type="entry name" value="ATPsyn_F1gamma"/>
    <property type="match status" value="1"/>
</dbReference>
<dbReference type="NCBIfam" id="NF004144">
    <property type="entry name" value="PRK05621.1-1"/>
    <property type="match status" value="1"/>
</dbReference>
<dbReference type="PANTHER" id="PTHR11693">
    <property type="entry name" value="ATP SYNTHASE GAMMA CHAIN"/>
    <property type="match status" value="1"/>
</dbReference>
<dbReference type="PANTHER" id="PTHR11693:SF22">
    <property type="entry name" value="ATP SYNTHASE SUBUNIT GAMMA, MITOCHONDRIAL"/>
    <property type="match status" value="1"/>
</dbReference>
<dbReference type="Pfam" id="PF00231">
    <property type="entry name" value="ATP-synt"/>
    <property type="match status" value="1"/>
</dbReference>
<dbReference type="PRINTS" id="PR00126">
    <property type="entry name" value="ATPASEGAMMA"/>
</dbReference>
<dbReference type="SUPFAM" id="SSF52943">
    <property type="entry name" value="ATP synthase (F1-ATPase), gamma subunit"/>
    <property type="match status" value="1"/>
</dbReference>
<dbReference type="PROSITE" id="PS00153">
    <property type="entry name" value="ATPASE_GAMMA"/>
    <property type="match status" value="1"/>
</dbReference>
<keyword id="KW-0066">ATP synthesis</keyword>
<keyword id="KW-0997">Cell inner membrane</keyword>
<keyword id="KW-1003">Cell membrane</keyword>
<keyword id="KW-0139">CF(1)</keyword>
<keyword id="KW-0375">Hydrogen ion transport</keyword>
<keyword id="KW-0406">Ion transport</keyword>
<keyword id="KW-0472">Membrane</keyword>
<keyword id="KW-0813">Transport</keyword>
<protein>
    <recommendedName>
        <fullName evidence="1">ATP synthase gamma chain</fullName>
    </recommendedName>
    <alternativeName>
        <fullName evidence="1">ATP synthase F1 sector gamma subunit</fullName>
    </alternativeName>
    <alternativeName>
        <fullName evidence="1">F-ATPase gamma subunit</fullName>
    </alternativeName>
</protein>
<reference key="1">
    <citation type="journal article" date="2010" name="J. Bacteriol.">
        <title>Genome sequence of the deep-rooted Yersinia pestis strain Angola reveals new insights into the evolution and pangenome of the plague bacterium.</title>
        <authorList>
            <person name="Eppinger M."/>
            <person name="Worsham P.L."/>
            <person name="Nikolich M.P."/>
            <person name="Riley D.R."/>
            <person name="Sebastian Y."/>
            <person name="Mou S."/>
            <person name="Achtman M."/>
            <person name="Lindler L.E."/>
            <person name="Ravel J."/>
        </authorList>
    </citation>
    <scope>NUCLEOTIDE SEQUENCE [LARGE SCALE GENOMIC DNA]</scope>
    <source>
        <strain>Angola</strain>
    </source>
</reference>
<name>ATPG_YERPG</name>
<accession>A9R5U0</accession>
<organism>
    <name type="scientific">Yersinia pestis bv. Antiqua (strain Angola)</name>
    <dbReference type="NCBI Taxonomy" id="349746"/>
    <lineage>
        <taxon>Bacteria</taxon>
        <taxon>Pseudomonadati</taxon>
        <taxon>Pseudomonadota</taxon>
        <taxon>Gammaproteobacteria</taxon>
        <taxon>Enterobacterales</taxon>
        <taxon>Yersiniaceae</taxon>
        <taxon>Yersinia</taxon>
    </lineage>
</organism>
<comment type="function">
    <text evidence="1">Produces ATP from ADP in the presence of a proton gradient across the membrane. The gamma chain is believed to be important in regulating ATPase activity and the flow of protons through the CF(0) complex.</text>
</comment>
<comment type="subunit">
    <text evidence="1">F-type ATPases have 2 components, CF(1) - the catalytic core - and CF(0) - the membrane proton channel. CF(1) has five subunits: alpha(3), beta(3), gamma(1), delta(1), epsilon(1). CF(0) has three main subunits: a, b and c.</text>
</comment>
<comment type="subcellular location">
    <subcellularLocation>
        <location evidence="1">Cell inner membrane</location>
        <topology evidence="1">Peripheral membrane protein</topology>
    </subcellularLocation>
</comment>
<comment type="similarity">
    <text evidence="1">Belongs to the ATPase gamma chain family.</text>
</comment>
<proteinExistence type="inferred from homology"/>